<protein>
    <recommendedName>
        <fullName evidence="1">Nucleotide-binding protein YajQ</fullName>
    </recommendedName>
</protein>
<comment type="function">
    <text evidence="1">Nucleotide-binding protein.</text>
</comment>
<comment type="similarity">
    <text evidence="1">Belongs to the YajQ family.</text>
</comment>
<feature type="chain" id="PRO_1000130649" description="Nucleotide-binding protein YajQ">
    <location>
        <begin position="1"/>
        <end position="163"/>
    </location>
</feature>
<organism>
    <name type="scientific">Salmonella schwarzengrund (strain CVM19633)</name>
    <dbReference type="NCBI Taxonomy" id="439843"/>
    <lineage>
        <taxon>Bacteria</taxon>
        <taxon>Pseudomonadati</taxon>
        <taxon>Pseudomonadota</taxon>
        <taxon>Gammaproteobacteria</taxon>
        <taxon>Enterobacterales</taxon>
        <taxon>Enterobacteriaceae</taxon>
        <taxon>Salmonella</taxon>
    </lineage>
</organism>
<gene>
    <name evidence="1" type="primary">yajQ</name>
    <name type="ordered locus">SeSA_A0495</name>
</gene>
<proteinExistence type="inferred from homology"/>
<reference key="1">
    <citation type="journal article" date="2011" name="J. Bacteriol.">
        <title>Comparative genomics of 28 Salmonella enterica isolates: evidence for CRISPR-mediated adaptive sublineage evolution.</title>
        <authorList>
            <person name="Fricke W.F."/>
            <person name="Mammel M.K."/>
            <person name="McDermott P.F."/>
            <person name="Tartera C."/>
            <person name="White D.G."/>
            <person name="Leclerc J.E."/>
            <person name="Ravel J."/>
            <person name="Cebula T.A."/>
        </authorList>
    </citation>
    <scope>NUCLEOTIDE SEQUENCE [LARGE SCALE GENOMIC DNA]</scope>
    <source>
        <strain>CVM19633</strain>
    </source>
</reference>
<keyword id="KW-0547">Nucleotide-binding</keyword>
<sequence length="163" mass="18319">MPSFDIVSEVDLQEARNGVDNAVREVESRFDFRGVEATIELNDANKTIKVLSESDFQVNQLLDILRAKLLKRGIEGASLDVPDEFVHSGKTWYVEAKLKQGIESAVQKKIVKLIKDSKLKVQAQIQGEEIRVTGKSRDDLQSVMALVRGGDLGQPFQFKNFRD</sequence>
<accession>B4TMB5</accession>
<evidence type="ECO:0000255" key="1">
    <source>
        <dbReference type="HAMAP-Rule" id="MF_00632"/>
    </source>
</evidence>
<dbReference type="EMBL" id="CP001127">
    <property type="protein sequence ID" value="ACF89361.1"/>
    <property type="molecule type" value="Genomic_DNA"/>
</dbReference>
<dbReference type="RefSeq" id="WP_001138913.1">
    <property type="nucleotide sequence ID" value="NC_011094.1"/>
</dbReference>
<dbReference type="SMR" id="B4TMB5"/>
<dbReference type="KEGG" id="sew:SeSA_A0495"/>
<dbReference type="HOGENOM" id="CLU_099839_1_0_6"/>
<dbReference type="Proteomes" id="UP000001865">
    <property type="component" value="Chromosome"/>
</dbReference>
<dbReference type="GO" id="GO:0005829">
    <property type="term" value="C:cytosol"/>
    <property type="evidence" value="ECO:0007669"/>
    <property type="project" value="TreeGrafter"/>
</dbReference>
<dbReference type="GO" id="GO:0000166">
    <property type="term" value="F:nucleotide binding"/>
    <property type="evidence" value="ECO:0007669"/>
    <property type="project" value="TreeGrafter"/>
</dbReference>
<dbReference type="CDD" id="cd11740">
    <property type="entry name" value="YajQ_like"/>
    <property type="match status" value="1"/>
</dbReference>
<dbReference type="FunFam" id="3.30.70.860:FF:000001">
    <property type="entry name" value="UPF0234 protein YajQ"/>
    <property type="match status" value="1"/>
</dbReference>
<dbReference type="FunFam" id="3.30.70.990:FF:000001">
    <property type="entry name" value="UPF0234 protein YajQ"/>
    <property type="match status" value="1"/>
</dbReference>
<dbReference type="Gene3D" id="3.30.70.860">
    <property type="match status" value="1"/>
</dbReference>
<dbReference type="Gene3D" id="3.30.70.990">
    <property type="entry name" value="YajQ-like, domain 2"/>
    <property type="match status" value="1"/>
</dbReference>
<dbReference type="HAMAP" id="MF_00632">
    <property type="entry name" value="YajQ"/>
    <property type="match status" value="1"/>
</dbReference>
<dbReference type="InterPro" id="IPR007551">
    <property type="entry name" value="DUF520"/>
</dbReference>
<dbReference type="InterPro" id="IPR035571">
    <property type="entry name" value="UPF0234-like_C"/>
</dbReference>
<dbReference type="InterPro" id="IPR035570">
    <property type="entry name" value="UPF0234_N"/>
</dbReference>
<dbReference type="InterPro" id="IPR036183">
    <property type="entry name" value="YajQ-like_sf"/>
</dbReference>
<dbReference type="NCBIfam" id="NF003819">
    <property type="entry name" value="PRK05412.1"/>
    <property type="match status" value="1"/>
</dbReference>
<dbReference type="PANTHER" id="PTHR30476">
    <property type="entry name" value="UPF0234 PROTEIN YAJQ"/>
    <property type="match status" value="1"/>
</dbReference>
<dbReference type="PANTHER" id="PTHR30476:SF0">
    <property type="entry name" value="UPF0234 PROTEIN YAJQ"/>
    <property type="match status" value="1"/>
</dbReference>
<dbReference type="Pfam" id="PF04461">
    <property type="entry name" value="DUF520"/>
    <property type="match status" value="1"/>
</dbReference>
<dbReference type="SUPFAM" id="SSF89963">
    <property type="entry name" value="YajQ-like"/>
    <property type="match status" value="2"/>
</dbReference>
<name>YAJQ_SALSV</name>